<reference key="1">
    <citation type="journal article" date="2003" name="Genome Res.">
        <title>Genome sequence of an M3 strain of Streptococcus pyogenes reveals a large-scale genomic rearrangement in invasive strains and new insights into phage evolution.</title>
        <authorList>
            <person name="Nakagawa I."/>
            <person name="Kurokawa K."/>
            <person name="Yamashita A."/>
            <person name="Nakata M."/>
            <person name="Tomiyasu Y."/>
            <person name="Okahashi N."/>
            <person name="Kawabata S."/>
            <person name="Yamazaki K."/>
            <person name="Shiba T."/>
            <person name="Yasunaga T."/>
            <person name="Hayashi H."/>
            <person name="Hattori M."/>
            <person name="Hamada S."/>
        </authorList>
    </citation>
    <scope>NUCLEOTIDE SEQUENCE [LARGE SCALE GENOMIC DNA]</scope>
    <source>
        <strain>SSI-1</strain>
    </source>
</reference>
<accession>P0DG29</accession>
<accession>P67576</accession>
<accession>Q9A0R9</accession>
<keyword id="KW-0030">Aminoacyl-tRNA synthetase</keyword>
<keyword id="KW-0067">ATP-binding</keyword>
<keyword id="KW-0963">Cytoplasm</keyword>
<keyword id="KW-0436">Ligase</keyword>
<keyword id="KW-0547">Nucleotide-binding</keyword>
<keyword id="KW-0648">Protein biosynthesis</keyword>
<comment type="catalytic activity">
    <reaction evidence="1">
        <text>tRNA(Asn) + L-asparagine + ATP = L-asparaginyl-tRNA(Asn) + AMP + diphosphate + H(+)</text>
        <dbReference type="Rhea" id="RHEA:11180"/>
        <dbReference type="Rhea" id="RHEA-COMP:9659"/>
        <dbReference type="Rhea" id="RHEA-COMP:9674"/>
        <dbReference type="ChEBI" id="CHEBI:15378"/>
        <dbReference type="ChEBI" id="CHEBI:30616"/>
        <dbReference type="ChEBI" id="CHEBI:33019"/>
        <dbReference type="ChEBI" id="CHEBI:58048"/>
        <dbReference type="ChEBI" id="CHEBI:78442"/>
        <dbReference type="ChEBI" id="CHEBI:78515"/>
        <dbReference type="ChEBI" id="CHEBI:456215"/>
        <dbReference type="EC" id="6.1.1.22"/>
    </reaction>
</comment>
<comment type="subunit">
    <text evidence="1">Homodimer.</text>
</comment>
<comment type="subcellular location">
    <subcellularLocation>
        <location evidence="1">Cytoplasm</location>
    </subcellularLocation>
</comment>
<comment type="similarity">
    <text evidence="1">Belongs to the class-II aminoacyl-tRNA synthetase family.</text>
</comment>
<dbReference type="EC" id="6.1.1.22" evidence="1"/>
<dbReference type="EMBL" id="BA000034">
    <property type="protein sequence ID" value="BAC64489.1"/>
    <property type="molecule type" value="Genomic_DNA"/>
</dbReference>
<dbReference type="RefSeq" id="WP_002985437.1">
    <property type="nucleotide sequence ID" value="NC_004606.1"/>
</dbReference>
<dbReference type="SMR" id="P0DG29"/>
<dbReference type="GeneID" id="69901153"/>
<dbReference type="KEGG" id="sps:SPs1394"/>
<dbReference type="HOGENOM" id="CLU_004553_2_0_9"/>
<dbReference type="GO" id="GO:0005737">
    <property type="term" value="C:cytoplasm"/>
    <property type="evidence" value="ECO:0007669"/>
    <property type="project" value="UniProtKB-SubCell"/>
</dbReference>
<dbReference type="GO" id="GO:0004816">
    <property type="term" value="F:asparagine-tRNA ligase activity"/>
    <property type="evidence" value="ECO:0007669"/>
    <property type="project" value="UniProtKB-UniRule"/>
</dbReference>
<dbReference type="GO" id="GO:0005524">
    <property type="term" value="F:ATP binding"/>
    <property type="evidence" value="ECO:0007669"/>
    <property type="project" value="UniProtKB-UniRule"/>
</dbReference>
<dbReference type="GO" id="GO:0140096">
    <property type="term" value="F:catalytic activity, acting on a protein"/>
    <property type="evidence" value="ECO:0007669"/>
    <property type="project" value="UniProtKB-ARBA"/>
</dbReference>
<dbReference type="GO" id="GO:0003676">
    <property type="term" value="F:nucleic acid binding"/>
    <property type="evidence" value="ECO:0007669"/>
    <property type="project" value="InterPro"/>
</dbReference>
<dbReference type="GO" id="GO:0016740">
    <property type="term" value="F:transferase activity"/>
    <property type="evidence" value="ECO:0007669"/>
    <property type="project" value="UniProtKB-ARBA"/>
</dbReference>
<dbReference type="GO" id="GO:0006421">
    <property type="term" value="P:asparaginyl-tRNA aminoacylation"/>
    <property type="evidence" value="ECO:0007669"/>
    <property type="project" value="UniProtKB-UniRule"/>
</dbReference>
<dbReference type="CDD" id="cd04323">
    <property type="entry name" value="AsnRS_cyto_like_N"/>
    <property type="match status" value="1"/>
</dbReference>
<dbReference type="CDD" id="cd00776">
    <property type="entry name" value="AsxRS_core"/>
    <property type="match status" value="1"/>
</dbReference>
<dbReference type="Gene3D" id="3.30.930.10">
    <property type="entry name" value="Bira Bifunctional Protein, Domain 2"/>
    <property type="match status" value="1"/>
</dbReference>
<dbReference type="Gene3D" id="2.40.50.140">
    <property type="entry name" value="Nucleic acid-binding proteins"/>
    <property type="match status" value="1"/>
</dbReference>
<dbReference type="HAMAP" id="MF_00534">
    <property type="entry name" value="Asn_tRNA_synth"/>
    <property type="match status" value="1"/>
</dbReference>
<dbReference type="InterPro" id="IPR004364">
    <property type="entry name" value="Aa-tRNA-synt_II"/>
</dbReference>
<dbReference type="InterPro" id="IPR006195">
    <property type="entry name" value="aa-tRNA-synth_II"/>
</dbReference>
<dbReference type="InterPro" id="IPR045864">
    <property type="entry name" value="aa-tRNA-synth_II/BPL/LPL"/>
</dbReference>
<dbReference type="InterPro" id="IPR004522">
    <property type="entry name" value="Asn-tRNA-ligase"/>
</dbReference>
<dbReference type="InterPro" id="IPR002312">
    <property type="entry name" value="Asp/Asn-tRNA-synth_IIb"/>
</dbReference>
<dbReference type="InterPro" id="IPR012340">
    <property type="entry name" value="NA-bd_OB-fold"/>
</dbReference>
<dbReference type="InterPro" id="IPR004365">
    <property type="entry name" value="NA-bd_OB_tRNA"/>
</dbReference>
<dbReference type="NCBIfam" id="TIGR00457">
    <property type="entry name" value="asnS"/>
    <property type="match status" value="1"/>
</dbReference>
<dbReference type="NCBIfam" id="NF003037">
    <property type="entry name" value="PRK03932.1"/>
    <property type="match status" value="1"/>
</dbReference>
<dbReference type="PANTHER" id="PTHR22594:SF34">
    <property type="entry name" value="ASPARAGINE--TRNA LIGASE, MITOCHONDRIAL-RELATED"/>
    <property type="match status" value="1"/>
</dbReference>
<dbReference type="PANTHER" id="PTHR22594">
    <property type="entry name" value="ASPARTYL/LYSYL-TRNA SYNTHETASE"/>
    <property type="match status" value="1"/>
</dbReference>
<dbReference type="Pfam" id="PF00152">
    <property type="entry name" value="tRNA-synt_2"/>
    <property type="match status" value="1"/>
</dbReference>
<dbReference type="Pfam" id="PF01336">
    <property type="entry name" value="tRNA_anti-codon"/>
    <property type="match status" value="1"/>
</dbReference>
<dbReference type="PRINTS" id="PR01042">
    <property type="entry name" value="TRNASYNTHASP"/>
</dbReference>
<dbReference type="SUPFAM" id="SSF55681">
    <property type="entry name" value="Class II aaRS and biotin synthetases"/>
    <property type="match status" value="1"/>
</dbReference>
<dbReference type="SUPFAM" id="SSF50249">
    <property type="entry name" value="Nucleic acid-binding proteins"/>
    <property type="match status" value="1"/>
</dbReference>
<dbReference type="PROSITE" id="PS50862">
    <property type="entry name" value="AA_TRNA_LIGASE_II"/>
    <property type="match status" value="1"/>
</dbReference>
<sequence>MSKKLISIVDVKDYVGQEVTIGAWVANKSGKGKIAFVQLRDGSAFFQGVAFKPNFIEKYGEESGLEKFDVIKRLNQETSVYVTGIVKEDERSKFGYELDITDLEIIGESHEYPITPKEHGTDFLMDNRHLWLRSRKQMAVMQIRNAIIYATYEFFDQNGFIKFDSPILSENAAEDSTELFETDYFGKPAFLSQSGQLYLEAGAMALGRVFDFGPVFRAEKSKTRRHLTEFWMMDAEYSFLSHEESLDLQEAYVKALIQGVLDRAPQALDILERDVEALKRYITEPFKRVSYDDAITLLQEHEADEDTDYEHLEHGDDFGSPHETWISNYFGVPTFVVNYPASFKAFYMKPVPGNPERVLCADLLAPEGYGEIIGGSMREDNYDALVAKMDELGMDKSEYDFYLDLRKYGSVPHGGFGIGIERMVTFVAGTKHIREAIPFPRMLHRIRP</sequence>
<evidence type="ECO:0000255" key="1">
    <source>
        <dbReference type="HAMAP-Rule" id="MF_00534"/>
    </source>
</evidence>
<name>SYN_STRPQ</name>
<protein>
    <recommendedName>
        <fullName evidence="1">Asparagine--tRNA ligase</fullName>
        <ecNumber evidence="1">6.1.1.22</ecNumber>
    </recommendedName>
    <alternativeName>
        <fullName evidence="1">Asparaginyl-tRNA synthetase</fullName>
        <shortName evidence="1">AsnRS</shortName>
    </alternativeName>
</protein>
<gene>
    <name evidence="1" type="primary">asnS</name>
    <name type="ordered locus">SPs1394</name>
</gene>
<proteinExistence type="inferred from homology"/>
<organism>
    <name type="scientific">Streptococcus pyogenes serotype M3 (strain SSI-1)</name>
    <dbReference type="NCBI Taxonomy" id="193567"/>
    <lineage>
        <taxon>Bacteria</taxon>
        <taxon>Bacillati</taxon>
        <taxon>Bacillota</taxon>
        <taxon>Bacilli</taxon>
        <taxon>Lactobacillales</taxon>
        <taxon>Streptococcaceae</taxon>
        <taxon>Streptococcus</taxon>
    </lineage>
</organism>
<feature type="chain" id="PRO_0000411604" description="Asparagine--tRNA ligase">
    <location>
        <begin position="1"/>
        <end position="448"/>
    </location>
</feature>